<dbReference type="EMBL" id="CP001614">
    <property type="protein sequence ID" value="ACR13686.1"/>
    <property type="molecule type" value="Genomic_DNA"/>
</dbReference>
<dbReference type="RefSeq" id="WP_015819801.1">
    <property type="nucleotide sequence ID" value="NC_012997.1"/>
</dbReference>
<dbReference type="SMR" id="C5BNW9"/>
<dbReference type="STRING" id="377629.TERTU_0705"/>
<dbReference type="KEGG" id="ttu:TERTU_0705"/>
<dbReference type="eggNOG" id="COG4108">
    <property type="taxonomic scope" value="Bacteria"/>
</dbReference>
<dbReference type="HOGENOM" id="CLU_002794_2_1_6"/>
<dbReference type="OrthoDB" id="9801472at2"/>
<dbReference type="Proteomes" id="UP000009080">
    <property type="component" value="Chromosome"/>
</dbReference>
<dbReference type="GO" id="GO:0005829">
    <property type="term" value="C:cytosol"/>
    <property type="evidence" value="ECO:0007669"/>
    <property type="project" value="TreeGrafter"/>
</dbReference>
<dbReference type="GO" id="GO:0005525">
    <property type="term" value="F:GTP binding"/>
    <property type="evidence" value="ECO:0007669"/>
    <property type="project" value="UniProtKB-UniRule"/>
</dbReference>
<dbReference type="GO" id="GO:0003924">
    <property type="term" value="F:GTPase activity"/>
    <property type="evidence" value="ECO:0007669"/>
    <property type="project" value="InterPro"/>
</dbReference>
<dbReference type="GO" id="GO:0097216">
    <property type="term" value="F:guanosine tetraphosphate binding"/>
    <property type="evidence" value="ECO:0007669"/>
    <property type="project" value="UniProtKB-ARBA"/>
</dbReference>
<dbReference type="GO" id="GO:0016150">
    <property type="term" value="F:translation release factor activity, codon nonspecific"/>
    <property type="evidence" value="ECO:0007669"/>
    <property type="project" value="TreeGrafter"/>
</dbReference>
<dbReference type="GO" id="GO:0016149">
    <property type="term" value="F:translation release factor activity, codon specific"/>
    <property type="evidence" value="ECO:0007669"/>
    <property type="project" value="UniProtKB-UniRule"/>
</dbReference>
<dbReference type="GO" id="GO:0006449">
    <property type="term" value="P:regulation of translational termination"/>
    <property type="evidence" value="ECO:0007669"/>
    <property type="project" value="UniProtKB-UniRule"/>
</dbReference>
<dbReference type="CDD" id="cd04169">
    <property type="entry name" value="RF3"/>
    <property type="match status" value="1"/>
</dbReference>
<dbReference type="CDD" id="cd03689">
    <property type="entry name" value="RF3_II"/>
    <property type="match status" value="1"/>
</dbReference>
<dbReference type="CDD" id="cd16259">
    <property type="entry name" value="RF3_III"/>
    <property type="match status" value="1"/>
</dbReference>
<dbReference type="FunFam" id="3.30.70.3280:FF:000001">
    <property type="entry name" value="Peptide chain release factor 3"/>
    <property type="match status" value="1"/>
</dbReference>
<dbReference type="FunFam" id="3.40.50.300:FF:000542">
    <property type="entry name" value="Peptide chain release factor 3"/>
    <property type="match status" value="1"/>
</dbReference>
<dbReference type="Gene3D" id="3.40.50.300">
    <property type="entry name" value="P-loop containing nucleotide triphosphate hydrolases"/>
    <property type="match status" value="2"/>
</dbReference>
<dbReference type="Gene3D" id="3.30.70.3280">
    <property type="entry name" value="Peptide chain release factor 3, domain III"/>
    <property type="match status" value="1"/>
</dbReference>
<dbReference type="HAMAP" id="MF_00072">
    <property type="entry name" value="Rel_fac_3"/>
    <property type="match status" value="1"/>
</dbReference>
<dbReference type="InterPro" id="IPR053905">
    <property type="entry name" value="EF-G-like_DII"/>
</dbReference>
<dbReference type="InterPro" id="IPR035647">
    <property type="entry name" value="EFG_III/V"/>
</dbReference>
<dbReference type="InterPro" id="IPR031157">
    <property type="entry name" value="G_TR_CS"/>
</dbReference>
<dbReference type="InterPro" id="IPR027417">
    <property type="entry name" value="P-loop_NTPase"/>
</dbReference>
<dbReference type="InterPro" id="IPR004548">
    <property type="entry name" value="PrfC"/>
</dbReference>
<dbReference type="InterPro" id="IPR032090">
    <property type="entry name" value="RF3_C"/>
</dbReference>
<dbReference type="InterPro" id="IPR038467">
    <property type="entry name" value="RF3_dom_3_sf"/>
</dbReference>
<dbReference type="InterPro" id="IPR041732">
    <property type="entry name" value="RF3_GTP-bd"/>
</dbReference>
<dbReference type="InterPro" id="IPR005225">
    <property type="entry name" value="Small_GTP-bd"/>
</dbReference>
<dbReference type="InterPro" id="IPR000795">
    <property type="entry name" value="T_Tr_GTP-bd_dom"/>
</dbReference>
<dbReference type="InterPro" id="IPR009000">
    <property type="entry name" value="Transl_B-barrel_sf"/>
</dbReference>
<dbReference type="NCBIfam" id="TIGR00503">
    <property type="entry name" value="prfC"/>
    <property type="match status" value="1"/>
</dbReference>
<dbReference type="NCBIfam" id="NF001964">
    <property type="entry name" value="PRK00741.1"/>
    <property type="match status" value="1"/>
</dbReference>
<dbReference type="NCBIfam" id="TIGR00231">
    <property type="entry name" value="small_GTP"/>
    <property type="match status" value="1"/>
</dbReference>
<dbReference type="PANTHER" id="PTHR43556">
    <property type="entry name" value="PEPTIDE CHAIN RELEASE FACTOR RF3"/>
    <property type="match status" value="1"/>
</dbReference>
<dbReference type="PANTHER" id="PTHR43556:SF2">
    <property type="entry name" value="PEPTIDE CHAIN RELEASE FACTOR RF3"/>
    <property type="match status" value="1"/>
</dbReference>
<dbReference type="Pfam" id="PF22042">
    <property type="entry name" value="EF-G_D2"/>
    <property type="match status" value="1"/>
</dbReference>
<dbReference type="Pfam" id="PF00009">
    <property type="entry name" value="GTP_EFTU"/>
    <property type="match status" value="1"/>
</dbReference>
<dbReference type="Pfam" id="PF16658">
    <property type="entry name" value="RF3_C"/>
    <property type="match status" value="1"/>
</dbReference>
<dbReference type="PRINTS" id="PR00315">
    <property type="entry name" value="ELONGATNFCT"/>
</dbReference>
<dbReference type="SUPFAM" id="SSF54980">
    <property type="entry name" value="EF-G C-terminal domain-like"/>
    <property type="match status" value="1"/>
</dbReference>
<dbReference type="SUPFAM" id="SSF52540">
    <property type="entry name" value="P-loop containing nucleoside triphosphate hydrolases"/>
    <property type="match status" value="1"/>
</dbReference>
<dbReference type="SUPFAM" id="SSF50447">
    <property type="entry name" value="Translation proteins"/>
    <property type="match status" value="1"/>
</dbReference>
<dbReference type="PROSITE" id="PS00301">
    <property type="entry name" value="G_TR_1"/>
    <property type="match status" value="1"/>
</dbReference>
<dbReference type="PROSITE" id="PS51722">
    <property type="entry name" value="G_TR_2"/>
    <property type="match status" value="1"/>
</dbReference>
<keyword id="KW-0963">Cytoplasm</keyword>
<keyword id="KW-0342">GTP-binding</keyword>
<keyword id="KW-0547">Nucleotide-binding</keyword>
<keyword id="KW-0648">Protein biosynthesis</keyword>
<keyword id="KW-1185">Reference proteome</keyword>
<name>RF3_TERTT</name>
<protein>
    <recommendedName>
        <fullName evidence="1">Peptide chain release factor 3</fullName>
        <shortName evidence="1">RF-3</shortName>
    </recommendedName>
</protein>
<proteinExistence type="inferred from homology"/>
<accession>C5BNW9</accession>
<comment type="function">
    <text evidence="1">Increases the formation of ribosomal termination complexes and stimulates activities of RF-1 and RF-2. It binds guanine nucleotides and has strong preference for UGA stop codons. It may interact directly with the ribosome. The stimulation of RF-1 and RF-2 is significantly reduced by GTP and GDP, but not by GMP.</text>
</comment>
<comment type="subcellular location">
    <subcellularLocation>
        <location evidence="1">Cytoplasm</location>
    </subcellularLocation>
</comment>
<comment type="similarity">
    <text evidence="1">Belongs to the TRAFAC class translation factor GTPase superfamily. Classic translation factor GTPase family. PrfC subfamily.</text>
</comment>
<organism>
    <name type="scientific">Teredinibacter turnerae (strain ATCC 39867 / T7901)</name>
    <dbReference type="NCBI Taxonomy" id="377629"/>
    <lineage>
        <taxon>Bacteria</taxon>
        <taxon>Pseudomonadati</taxon>
        <taxon>Pseudomonadota</taxon>
        <taxon>Gammaproteobacteria</taxon>
        <taxon>Cellvibrionales</taxon>
        <taxon>Cellvibrionaceae</taxon>
        <taxon>Teredinibacter</taxon>
    </lineage>
</organism>
<feature type="chain" id="PRO_1000202471" description="Peptide chain release factor 3">
    <location>
        <begin position="1"/>
        <end position="527"/>
    </location>
</feature>
<feature type="domain" description="tr-type G">
    <location>
        <begin position="11"/>
        <end position="278"/>
    </location>
</feature>
<feature type="binding site" evidence="1">
    <location>
        <begin position="20"/>
        <end position="27"/>
    </location>
    <ligand>
        <name>GTP</name>
        <dbReference type="ChEBI" id="CHEBI:37565"/>
    </ligand>
</feature>
<feature type="binding site" evidence="1">
    <location>
        <begin position="87"/>
        <end position="91"/>
    </location>
    <ligand>
        <name>GTP</name>
        <dbReference type="ChEBI" id="CHEBI:37565"/>
    </ligand>
</feature>
<feature type="binding site" evidence="1">
    <location>
        <begin position="141"/>
        <end position="144"/>
    </location>
    <ligand>
        <name>GTP</name>
        <dbReference type="ChEBI" id="CHEBI:37565"/>
    </ligand>
</feature>
<sequence length="527" mass="59055">MASSQLAKEIAKRRTFAIISHPDAGKTTITEKLLLFGNAIQLAGSVKGKRGPHAKSDWMTMEQERGISVTSSVMQFPYKERVVNLLDTPGHEDFSEDTYRTLTAVDSVLMVIDGAKGVEDRTIKLMEVCRLRDTPILSFINKMDRDIRDPVEVMDEIEDVLKIAAAPINWPIGMGKEFKGVYNLYTDTIHLYEHGQGHTIPEDIQIKGLDSEEASALLGAYAEDVREEIELVRGATHEFDLDAYHAGELTPVFFGTALGNFGVREMLDGFVEWAPAPLDRDTAERKVAADEDKFSGFIFKIQANMDPKHRDRIAFMRVCSGRYSQGMKMRHVRLGKDVKIADAVTFLAGDRSQVEEAISGDIIGLHNHGTIQIGDTFSSGEILKFTGIPHFAPELFRRIRLKDPLKTKQLQRGLQQLSEEGSTQVFFPLNNNDIVVGAVGVLQFEVVAYRLKDEYKVEAIYEPVNVNTARWVDCSDDKKLAEFKRKCSDNLALDGGGHLTYLAPTRVNLSLSEERYPDVAFRATREH</sequence>
<gene>
    <name evidence="1" type="primary">prfC</name>
    <name type="ordered locus">TERTU_0705</name>
</gene>
<reference key="1">
    <citation type="journal article" date="2009" name="PLoS ONE">
        <title>The complete genome of Teredinibacter turnerae T7901: an intracellular endosymbiont of marine wood-boring bivalves (shipworms).</title>
        <authorList>
            <person name="Yang J.C."/>
            <person name="Madupu R."/>
            <person name="Durkin A.S."/>
            <person name="Ekborg N.A."/>
            <person name="Pedamallu C.S."/>
            <person name="Hostetler J.B."/>
            <person name="Radune D."/>
            <person name="Toms B.S."/>
            <person name="Henrissat B."/>
            <person name="Coutinho P.M."/>
            <person name="Schwarz S."/>
            <person name="Field L."/>
            <person name="Trindade-Silva A.E."/>
            <person name="Soares C.A.G."/>
            <person name="Elshahawi S."/>
            <person name="Hanora A."/>
            <person name="Schmidt E.W."/>
            <person name="Haygood M.G."/>
            <person name="Posfai J."/>
            <person name="Benner J."/>
            <person name="Madinger C."/>
            <person name="Nove J."/>
            <person name="Anton B."/>
            <person name="Chaudhary K."/>
            <person name="Foster J."/>
            <person name="Holman A."/>
            <person name="Kumar S."/>
            <person name="Lessard P.A."/>
            <person name="Luyten Y.A."/>
            <person name="Slatko B."/>
            <person name="Wood N."/>
            <person name="Wu B."/>
            <person name="Teplitski M."/>
            <person name="Mougous J.D."/>
            <person name="Ward N."/>
            <person name="Eisen J.A."/>
            <person name="Badger J.H."/>
            <person name="Distel D.L."/>
        </authorList>
    </citation>
    <scope>NUCLEOTIDE SEQUENCE [LARGE SCALE GENOMIC DNA]</scope>
    <source>
        <strain>ATCC 39867 / T7901</strain>
    </source>
</reference>
<evidence type="ECO:0000255" key="1">
    <source>
        <dbReference type="HAMAP-Rule" id="MF_00072"/>
    </source>
</evidence>